<sequence length="508" mass="56824">MILVLDFGSQYTQLIARRLRERGIYTEIVPFFESIENIQKKAPKGLILSGGPASVYAKDAYKPSGKIFDLNVPILGICYGMQYLVDFFGGVVVGANEQEFGKAVLEITQNSVIFEGVKIKSLVWMSHMDKVIELPKGFTTLAKSPNSPHCAIENGKIFGLQFHPEVVQSEEGGKILENFALLVCGCEKTWGMQHFAQREIARLKEKIANAKVLCAVSGGVDSTVVATLLHRAIKDNLIAVFVDHGLLRKNEKERVQAMFKDLKIPLNTIDAKEVFLSKLKGVSEPELKRKIIGETFIEVFEKEAKKHHLKGKIEFLAQGTLYPDVIESVSVKGPSKVIKTHHNVGGLPEWMDFKLIEPLRELFKDEVRLLGKELGVSQDFLMRHPFPGPGLAVRILGEISESKIKRLQEADFIFIEELKKANLYDKVWQAFCVLLNVNSVGVMGDNRTYENAICLRAVNASDGMTASFSFLEHSFLEKVSNRITNEVSGINRVVYDITSKPPGTIEWE</sequence>
<keyword id="KW-0067">ATP-binding</keyword>
<keyword id="KW-0315">Glutamine amidotransferase</keyword>
<keyword id="KW-0332">GMP biosynthesis</keyword>
<keyword id="KW-0436">Ligase</keyword>
<keyword id="KW-0547">Nucleotide-binding</keyword>
<keyword id="KW-0658">Purine biosynthesis</keyword>
<keyword id="KW-1185">Reference proteome</keyword>
<dbReference type="EC" id="6.3.5.2"/>
<dbReference type="EMBL" id="AE000511">
    <property type="protein sequence ID" value="AAD07477.1"/>
    <property type="molecule type" value="Genomic_DNA"/>
</dbReference>
<dbReference type="PIR" id="A64571">
    <property type="entry name" value="A64571"/>
</dbReference>
<dbReference type="RefSeq" id="NP_207207.1">
    <property type="nucleotide sequence ID" value="NC_000915.1"/>
</dbReference>
<dbReference type="RefSeq" id="WP_000604593.1">
    <property type="nucleotide sequence ID" value="NC_018939.1"/>
</dbReference>
<dbReference type="SMR" id="O25165"/>
<dbReference type="DIP" id="DIP-3393N"/>
<dbReference type="FunCoup" id="O25165">
    <property type="interactions" value="370"/>
</dbReference>
<dbReference type="IntAct" id="O25165">
    <property type="interactions" value="1"/>
</dbReference>
<dbReference type="MINT" id="O25165"/>
<dbReference type="STRING" id="85962.HP_0409"/>
<dbReference type="MEROPS" id="C26.957"/>
<dbReference type="PaxDb" id="85962-C694_02085"/>
<dbReference type="EnsemblBacteria" id="AAD07477">
    <property type="protein sequence ID" value="AAD07477"/>
    <property type="gene ID" value="HP_0409"/>
</dbReference>
<dbReference type="KEGG" id="heo:C694_02085"/>
<dbReference type="KEGG" id="hpy:HP_0409"/>
<dbReference type="PATRIC" id="fig|85962.47.peg.434"/>
<dbReference type="eggNOG" id="COG0518">
    <property type="taxonomic scope" value="Bacteria"/>
</dbReference>
<dbReference type="eggNOG" id="COG0519">
    <property type="taxonomic scope" value="Bacteria"/>
</dbReference>
<dbReference type="InParanoid" id="O25165"/>
<dbReference type="OrthoDB" id="9802219at2"/>
<dbReference type="PhylomeDB" id="O25165"/>
<dbReference type="UniPathway" id="UPA00189">
    <property type="reaction ID" value="UER00296"/>
</dbReference>
<dbReference type="Proteomes" id="UP000000429">
    <property type="component" value="Chromosome"/>
</dbReference>
<dbReference type="GO" id="GO:0005829">
    <property type="term" value="C:cytosol"/>
    <property type="evidence" value="ECO:0000318"/>
    <property type="project" value="GO_Central"/>
</dbReference>
<dbReference type="GO" id="GO:0005524">
    <property type="term" value="F:ATP binding"/>
    <property type="evidence" value="ECO:0007669"/>
    <property type="project" value="UniProtKB-UniRule"/>
</dbReference>
<dbReference type="GO" id="GO:0003921">
    <property type="term" value="F:GMP synthase activity"/>
    <property type="evidence" value="ECO:0000318"/>
    <property type="project" value="GO_Central"/>
</dbReference>
<dbReference type="GO" id="GO:0006177">
    <property type="term" value="P:GMP biosynthetic process"/>
    <property type="evidence" value="ECO:0000318"/>
    <property type="project" value="GO_Central"/>
</dbReference>
<dbReference type="CDD" id="cd01742">
    <property type="entry name" value="GATase1_GMP_Synthase"/>
    <property type="match status" value="1"/>
</dbReference>
<dbReference type="CDD" id="cd01997">
    <property type="entry name" value="GMP_synthase_C"/>
    <property type="match status" value="1"/>
</dbReference>
<dbReference type="FunFam" id="3.30.300.10:FF:000002">
    <property type="entry name" value="GMP synthase [glutamine-hydrolyzing]"/>
    <property type="match status" value="1"/>
</dbReference>
<dbReference type="FunFam" id="3.40.50.620:FF:000001">
    <property type="entry name" value="GMP synthase [glutamine-hydrolyzing]"/>
    <property type="match status" value="1"/>
</dbReference>
<dbReference type="FunFam" id="3.40.50.880:FF:000001">
    <property type="entry name" value="GMP synthase [glutamine-hydrolyzing]"/>
    <property type="match status" value="1"/>
</dbReference>
<dbReference type="Gene3D" id="3.30.300.10">
    <property type="match status" value="1"/>
</dbReference>
<dbReference type="Gene3D" id="3.40.50.880">
    <property type="match status" value="1"/>
</dbReference>
<dbReference type="Gene3D" id="3.40.50.620">
    <property type="entry name" value="HUPs"/>
    <property type="match status" value="1"/>
</dbReference>
<dbReference type="HAMAP" id="MF_00344">
    <property type="entry name" value="GMP_synthase"/>
    <property type="match status" value="1"/>
</dbReference>
<dbReference type="InterPro" id="IPR029062">
    <property type="entry name" value="Class_I_gatase-like"/>
</dbReference>
<dbReference type="InterPro" id="IPR017926">
    <property type="entry name" value="GATASE"/>
</dbReference>
<dbReference type="InterPro" id="IPR001674">
    <property type="entry name" value="GMP_synth_C"/>
</dbReference>
<dbReference type="InterPro" id="IPR004739">
    <property type="entry name" value="GMP_synth_GATase"/>
</dbReference>
<dbReference type="InterPro" id="IPR022955">
    <property type="entry name" value="GMP_synthase"/>
</dbReference>
<dbReference type="InterPro" id="IPR025777">
    <property type="entry name" value="GMPS_ATP_PPase_dom"/>
</dbReference>
<dbReference type="InterPro" id="IPR022310">
    <property type="entry name" value="NAD/GMP_synthase"/>
</dbReference>
<dbReference type="InterPro" id="IPR014729">
    <property type="entry name" value="Rossmann-like_a/b/a_fold"/>
</dbReference>
<dbReference type="NCBIfam" id="TIGR00884">
    <property type="entry name" value="guaA_Cterm"/>
    <property type="match status" value="1"/>
</dbReference>
<dbReference type="NCBIfam" id="TIGR00888">
    <property type="entry name" value="guaA_Nterm"/>
    <property type="match status" value="1"/>
</dbReference>
<dbReference type="NCBIfam" id="NF000848">
    <property type="entry name" value="PRK00074.1"/>
    <property type="match status" value="1"/>
</dbReference>
<dbReference type="PANTHER" id="PTHR11922:SF2">
    <property type="entry name" value="GMP SYNTHASE [GLUTAMINE-HYDROLYZING]"/>
    <property type="match status" value="1"/>
</dbReference>
<dbReference type="PANTHER" id="PTHR11922">
    <property type="entry name" value="GMP SYNTHASE-RELATED"/>
    <property type="match status" value="1"/>
</dbReference>
<dbReference type="Pfam" id="PF00117">
    <property type="entry name" value="GATase"/>
    <property type="match status" value="1"/>
</dbReference>
<dbReference type="Pfam" id="PF00958">
    <property type="entry name" value="GMP_synt_C"/>
    <property type="match status" value="1"/>
</dbReference>
<dbReference type="Pfam" id="PF02540">
    <property type="entry name" value="NAD_synthase"/>
    <property type="match status" value="1"/>
</dbReference>
<dbReference type="PRINTS" id="PR00097">
    <property type="entry name" value="ANTSNTHASEII"/>
</dbReference>
<dbReference type="PRINTS" id="PR00096">
    <property type="entry name" value="GATASE"/>
</dbReference>
<dbReference type="SUPFAM" id="SSF52402">
    <property type="entry name" value="Adenine nucleotide alpha hydrolases-like"/>
    <property type="match status" value="1"/>
</dbReference>
<dbReference type="SUPFAM" id="SSF52317">
    <property type="entry name" value="Class I glutamine amidotransferase-like"/>
    <property type="match status" value="1"/>
</dbReference>
<dbReference type="SUPFAM" id="SSF54810">
    <property type="entry name" value="GMP synthetase C-terminal dimerisation domain"/>
    <property type="match status" value="1"/>
</dbReference>
<dbReference type="PROSITE" id="PS51273">
    <property type="entry name" value="GATASE_TYPE_1"/>
    <property type="match status" value="1"/>
</dbReference>
<dbReference type="PROSITE" id="PS51553">
    <property type="entry name" value="GMPS_ATP_PPASE"/>
    <property type="match status" value="1"/>
</dbReference>
<name>GUAA_HELPY</name>
<comment type="function">
    <text evidence="1">Catalyzes the synthesis of GMP from XMP.</text>
</comment>
<comment type="catalytic activity">
    <reaction>
        <text>XMP + L-glutamine + ATP + H2O = GMP + L-glutamate + AMP + diphosphate + 2 H(+)</text>
        <dbReference type="Rhea" id="RHEA:11680"/>
        <dbReference type="ChEBI" id="CHEBI:15377"/>
        <dbReference type="ChEBI" id="CHEBI:15378"/>
        <dbReference type="ChEBI" id="CHEBI:29985"/>
        <dbReference type="ChEBI" id="CHEBI:30616"/>
        <dbReference type="ChEBI" id="CHEBI:33019"/>
        <dbReference type="ChEBI" id="CHEBI:57464"/>
        <dbReference type="ChEBI" id="CHEBI:58115"/>
        <dbReference type="ChEBI" id="CHEBI:58359"/>
        <dbReference type="ChEBI" id="CHEBI:456215"/>
        <dbReference type="EC" id="6.3.5.2"/>
    </reaction>
</comment>
<comment type="pathway">
    <text>Purine metabolism; GMP biosynthesis; GMP from XMP (L-Gln route): step 1/1.</text>
</comment>
<comment type="subunit">
    <text evidence="1">Homodimer.</text>
</comment>
<accession>O25165</accession>
<feature type="chain" id="PRO_0000140133" description="GMP synthase [glutamine-hydrolyzing]">
    <location>
        <begin position="1"/>
        <end position="508"/>
    </location>
</feature>
<feature type="domain" description="Glutamine amidotransferase type-1">
    <location>
        <begin position="1"/>
        <end position="189"/>
    </location>
</feature>
<feature type="domain" description="GMPS ATP-PPase">
    <location>
        <begin position="190"/>
        <end position="383"/>
    </location>
</feature>
<feature type="active site" description="Nucleophile" evidence="1">
    <location>
        <position position="78"/>
    </location>
</feature>
<feature type="active site" evidence="1">
    <location>
        <position position="163"/>
    </location>
</feature>
<feature type="active site" evidence="1">
    <location>
        <position position="165"/>
    </location>
</feature>
<feature type="binding site" evidence="1">
    <location>
        <begin position="217"/>
        <end position="223"/>
    </location>
    <ligand>
        <name>ATP</name>
        <dbReference type="ChEBI" id="CHEBI:30616"/>
    </ligand>
</feature>
<evidence type="ECO:0000250" key="1"/>
<organism>
    <name type="scientific">Helicobacter pylori (strain ATCC 700392 / 26695)</name>
    <name type="common">Campylobacter pylori</name>
    <dbReference type="NCBI Taxonomy" id="85962"/>
    <lineage>
        <taxon>Bacteria</taxon>
        <taxon>Pseudomonadati</taxon>
        <taxon>Campylobacterota</taxon>
        <taxon>Epsilonproteobacteria</taxon>
        <taxon>Campylobacterales</taxon>
        <taxon>Helicobacteraceae</taxon>
        <taxon>Helicobacter</taxon>
    </lineage>
</organism>
<proteinExistence type="inferred from homology"/>
<reference key="1">
    <citation type="journal article" date="1997" name="Nature">
        <title>The complete genome sequence of the gastric pathogen Helicobacter pylori.</title>
        <authorList>
            <person name="Tomb J.-F."/>
            <person name="White O."/>
            <person name="Kerlavage A.R."/>
            <person name="Clayton R.A."/>
            <person name="Sutton G.G."/>
            <person name="Fleischmann R.D."/>
            <person name="Ketchum K.A."/>
            <person name="Klenk H.-P."/>
            <person name="Gill S.R."/>
            <person name="Dougherty B.A."/>
            <person name="Nelson K.E."/>
            <person name="Quackenbush J."/>
            <person name="Zhou L."/>
            <person name="Kirkness E.F."/>
            <person name="Peterson S.N."/>
            <person name="Loftus B.J."/>
            <person name="Richardson D.L."/>
            <person name="Dodson R.J."/>
            <person name="Khalak H.G."/>
            <person name="Glodek A."/>
            <person name="McKenney K."/>
            <person name="FitzGerald L.M."/>
            <person name="Lee N."/>
            <person name="Adams M.D."/>
            <person name="Hickey E.K."/>
            <person name="Berg D.E."/>
            <person name="Gocayne J.D."/>
            <person name="Utterback T.R."/>
            <person name="Peterson J.D."/>
            <person name="Kelley J.M."/>
            <person name="Cotton M.D."/>
            <person name="Weidman J.F."/>
            <person name="Fujii C."/>
            <person name="Bowman C."/>
            <person name="Watthey L."/>
            <person name="Wallin E."/>
            <person name="Hayes W.S."/>
            <person name="Borodovsky M."/>
            <person name="Karp P.D."/>
            <person name="Smith H.O."/>
            <person name="Fraser C.M."/>
            <person name="Venter J.C."/>
        </authorList>
    </citation>
    <scope>NUCLEOTIDE SEQUENCE [LARGE SCALE GENOMIC DNA]</scope>
    <source>
        <strain>ATCC 700392 / 26695</strain>
    </source>
</reference>
<protein>
    <recommendedName>
        <fullName>GMP synthase [glutamine-hydrolyzing]</fullName>
        <ecNumber>6.3.5.2</ecNumber>
    </recommendedName>
    <alternativeName>
        <fullName>GMP synthetase</fullName>
    </alternativeName>
    <alternativeName>
        <fullName>Glutamine amidotransferase</fullName>
    </alternativeName>
</protein>
<gene>
    <name type="primary">guaA</name>
    <name type="ordered locus">HP_0409</name>
</gene>